<accession>P63796</accession>
<accession>Q99UL7</accession>
<reference key="1">
    <citation type="journal article" date="2001" name="Lancet">
        <title>Whole genome sequencing of meticillin-resistant Staphylococcus aureus.</title>
        <authorList>
            <person name="Kuroda M."/>
            <person name="Ohta T."/>
            <person name="Uchiyama I."/>
            <person name="Baba T."/>
            <person name="Yuzawa H."/>
            <person name="Kobayashi I."/>
            <person name="Cui L."/>
            <person name="Oguchi A."/>
            <person name="Aoki K."/>
            <person name="Nagai Y."/>
            <person name="Lian J.-Q."/>
            <person name="Ito T."/>
            <person name="Kanamori M."/>
            <person name="Matsumaru H."/>
            <person name="Maruyama A."/>
            <person name="Murakami H."/>
            <person name="Hosoyama A."/>
            <person name="Mizutani-Ui Y."/>
            <person name="Takahashi N.K."/>
            <person name="Sawano T."/>
            <person name="Inoue R."/>
            <person name="Kaito C."/>
            <person name="Sekimizu K."/>
            <person name="Hirakawa H."/>
            <person name="Kuhara S."/>
            <person name="Goto S."/>
            <person name="Yabuzaki J."/>
            <person name="Kanehisa M."/>
            <person name="Yamashita A."/>
            <person name="Oshima K."/>
            <person name="Furuya K."/>
            <person name="Yoshino C."/>
            <person name="Shiba T."/>
            <person name="Hattori M."/>
            <person name="Ogasawara N."/>
            <person name="Hayashi H."/>
            <person name="Hiramatsu K."/>
        </authorList>
    </citation>
    <scope>NUCLEOTIDE SEQUENCE [LARGE SCALE GENOMIC DNA]</scope>
    <source>
        <strain>Mu50 / ATCC 700699</strain>
    </source>
</reference>
<sequence>MDTAGIRLTPKEIVSKLNEYIVGQNDAKRKVAIALRNRYRRSLLDEESKQEISPKNILMIGPTGVGKTEIARRMAKVVGAPFIKVEATKFTELGYVGRDVESMVRDLVDVSVRLVKAQKKSLVQDEATAKANEKLVKLLVPSMKKKASQTNNPLESLFGGAIPNFGQNNEDEEEPPTEEIKTKRSEIKRQLEEGKLEKEKVRIKVEQDPGALGMLGTNQNQQMQEMMNQLMPKKKVEREVAVETARKILADSYADELIDQESANQEALELAEQMGIIFIDEIDKVATNNHNSGQDVSRQGVQRDILPILEGSVIQTKYGTVNTEHMLFIGAGAFHVSKPSDLIPELQGRFPIRVELDSLSVEDFVRILTEPKLSLIKQYEALLQTEEVTVNFTDEAITRLAEIAYQVNQDTDNIGARRLHTILEKMLEDLSFEAPSMPNAVVDITPQYVDDKLKSISTNKDLSAFIL</sequence>
<comment type="function">
    <text evidence="1">ATPase subunit of a proteasome-like degradation complex; this subunit has chaperone activity. The binding of ATP and its subsequent hydrolysis by HslU are essential for unfolding of protein substrates subsequently hydrolyzed by HslV. HslU recognizes the N-terminal part of its protein substrates and unfolds these before they are guided to HslV for hydrolysis.</text>
</comment>
<comment type="subunit">
    <text evidence="1">A double ring-shaped homohexamer of HslV is capped on each side by a ring-shaped HslU homohexamer. The assembly of the HslU/HslV complex is dependent on binding of ATP.</text>
</comment>
<comment type="subcellular location">
    <subcellularLocation>
        <location evidence="1">Cytoplasm</location>
    </subcellularLocation>
</comment>
<comment type="similarity">
    <text evidence="1">Belongs to the ClpX chaperone family. HslU subfamily.</text>
</comment>
<gene>
    <name evidence="1" type="primary">hslU</name>
    <name type="synonym">clpY</name>
    <name type="ordered locus">SAV1254</name>
</gene>
<name>HSLU_STAAM</name>
<evidence type="ECO:0000255" key="1">
    <source>
        <dbReference type="HAMAP-Rule" id="MF_00249"/>
    </source>
</evidence>
<evidence type="ECO:0000256" key="2">
    <source>
        <dbReference type="SAM" id="MobiDB-lite"/>
    </source>
</evidence>
<evidence type="ECO:0007829" key="3">
    <source>
        <dbReference type="PDB" id="6KWW"/>
    </source>
</evidence>
<protein>
    <recommendedName>
        <fullName evidence="1">ATP-dependent protease ATPase subunit HslU</fullName>
    </recommendedName>
    <alternativeName>
        <fullName evidence="1">Unfoldase HslU</fullName>
    </alternativeName>
</protein>
<organism>
    <name type="scientific">Staphylococcus aureus (strain Mu50 / ATCC 700699)</name>
    <dbReference type="NCBI Taxonomy" id="158878"/>
    <lineage>
        <taxon>Bacteria</taxon>
        <taxon>Bacillati</taxon>
        <taxon>Bacillota</taxon>
        <taxon>Bacilli</taxon>
        <taxon>Bacillales</taxon>
        <taxon>Staphylococcaceae</taxon>
        <taxon>Staphylococcus</taxon>
    </lineage>
</organism>
<dbReference type="EMBL" id="BA000017">
    <property type="protein sequence ID" value="BAB57416.1"/>
    <property type="molecule type" value="Genomic_DNA"/>
</dbReference>
<dbReference type="RefSeq" id="WP_000379044.1">
    <property type="nucleotide sequence ID" value="NC_002758.2"/>
</dbReference>
<dbReference type="PDB" id="6KWW">
    <property type="method" value="X-ray"/>
    <property type="resolution" value="3.00 A"/>
    <property type="chains" value="A/B/C/D/E/F/G/H/I/J/K/L/M/N/O/P/Q/R/S/T/U/V/W/X=1-467"/>
</dbReference>
<dbReference type="PDBsum" id="6KWW"/>
<dbReference type="SMR" id="P63796"/>
<dbReference type="KEGG" id="sav:SAV1254"/>
<dbReference type="HOGENOM" id="CLU_033123_0_0_9"/>
<dbReference type="PhylomeDB" id="P63796"/>
<dbReference type="Proteomes" id="UP000002481">
    <property type="component" value="Chromosome"/>
</dbReference>
<dbReference type="GO" id="GO:0009376">
    <property type="term" value="C:HslUV protease complex"/>
    <property type="evidence" value="ECO:0007669"/>
    <property type="project" value="UniProtKB-UniRule"/>
</dbReference>
<dbReference type="GO" id="GO:0005524">
    <property type="term" value="F:ATP binding"/>
    <property type="evidence" value="ECO:0007669"/>
    <property type="project" value="UniProtKB-UniRule"/>
</dbReference>
<dbReference type="GO" id="GO:0016887">
    <property type="term" value="F:ATP hydrolysis activity"/>
    <property type="evidence" value="ECO:0007669"/>
    <property type="project" value="InterPro"/>
</dbReference>
<dbReference type="GO" id="GO:0008233">
    <property type="term" value="F:peptidase activity"/>
    <property type="evidence" value="ECO:0007669"/>
    <property type="project" value="InterPro"/>
</dbReference>
<dbReference type="GO" id="GO:0036402">
    <property type="term" value="F:proteasome-activating activity"/>
    <property type="evidence" value="ECO:0007669"/>
    <property type="project" value="UniProtKB-UniRule"/>
</dbReference>
<dbReference type="GO" id="GO:0043335">
    <property type="term" value="P:protein unfolding"/>
    <property type="evidence" value="ECO:0007669"/>
    <property type="project" value="UniProtKB-UniRule"/>
</dbReference>
<dbReference type="GO" id="GO:0051603">
    <property type="term" value="P:proteolysis involved in protein catabolic process"/>
    <property type="evidence" value="ECO:0007669"/>
    <property type="project" value="TreeGrafter"/>
</dbReference>
<dbReference type="CDD" id="cd19498">
    <property type="entry name" value="RecA-like_HslU"/>
    <property type="match status" value="1"/>
</dbReference>
<dbReference type="FunFam" id="3.40.50.300:FF:000220">
    <property type="entry name" value="ATP-dependent protease ATPase subunit HslU"/>
    <property type="match status" value="1"/>
</dbReference>
<dbReference type="Gene3D" id="1.10.8.60">
    <property type="match status" value="1"/>
</dbReference>
<dbReference type="Gene3D" id="3.40.50.300">
    <property type="entry name" value="P-loop containing nucleotide triphosphate hydrolases"/>
    <property type="match status" value="2"/>
</dbReference>
<dbReference type="HAMAP" id="MF_00249">
    <property type="entry name" value="HslU"/>
    <property type="match status" value="1"/>
</dbReference>
<dbReference type="InterPro" id="IPR003593">
    <property type="entry name" value="AAA+_ATPase"/>
</dbReference>
<dbReference type="InterPro" id="IPR050052">
    <property type="entry name" value="ATP-dep_Clp_protease_ClpX"/>
</dbReference>
<dbReference type="InterPro" id="IPR003959">
    <property type="entry name" value="ATPase_AAA_core"/>
</dbReference>
<dbReference type="InterPro" id="IPR019489">
    <property type="entry name" value="Clp_ATPase_C"/>
</dbReference>
<dbReference type="InterPro" id="IPR004491">
    <property type="entry name" value="HslU"/>
</dbReference>
<dbReference type="InterPro" id="IPR027417">
    <property type="entry name" value="P-loop_NTPase"/>
</dbReference>
<dbReference type="NCBIfam" id="TIGR00390">
    <property type="entry name" value="hslU"/>
    <property type="match status" value="1"/>
</dbReference>
<dbReference type="NCBIfam" id="NF003544">
    <property type="entry name" value="PRK05201.1"/>
    <property type="match status" value="1"/>
</dbReference>
<dbReference type="PANTHER" id="PTHR48102">
    <property type="entry name" value="ATP-DEPENDENT CLP PROTEASE ATP-BINDING SUBUNIT CLPX-LIKE, MITOCHONDRIAL-RELATED"/>
    <property type="match status" value="1"/>
</dbReference>
<dbReference type="PANTHER" id="PTHR48102:SF3">
    <property type="entry name" value="ATP-DEPENDENT PROTEASE ATPASE SUBUNIT HSLU"/>
    <property type="match status" value="1"/>
</dbReference>
<dbReference type="Pfam" id="PF00004">
    <property type="entry name" value="AAA"/>
    <property type="match status" value="1"/>
</dbReference>
<dbReference type="Pfam" id="PF07724">
    <property type="entry name" value="AAA_2"/>
    <property type="match status" value="1"/>
</dbReference>
<dbReference type="Pfam" id="PF10431">
    <property type="entry name" value="ClpB_D2-small"/>
    <property type="match status" value="1"/>
</dbReference>
<dbReference type="SMART" id="SM00382">
    <property type="entry name" value="AAA"/>
    <property type="match status" value="1"/>
</dbReference>
<dbReference type="SMART" id="SM01086">
    <property type="entry name" value="ClpB_D2-small"/>
    <property type="match status" value="1"/>
</dbReference>
<dbReference type="SUPFAM" id="SSF52540">
    <property type="entry name" value="P-loop containing nucleoside triphosphate hydrolases"/>
    <property type="match status" value="1"/>
</dbReference>
<keyword id="KW-0002">3D-structure</keyword>
<keyword id="KW-0067">ATP-binding</keyword>
<keyword id="KW-0143">Chaperone</keyword>
<keyword id="KW-0963">Cytoplasm</keyword>
<keyword id="KW-0547">Nucleotide-binding</keyword>
<feature type="chain" id="PRO_0000160548" description="ATP-dependent protease ATPase subunit HslU">
    <location>
        <begin position="1"/>
        <end position="467"/>
    </location>
</feature>
<feature type="region of interest" description="Disordered" evidence="2">
    <location>
        <begin position="149"/>
        <end position="192"/>
    </location>
</feature>
<feature type="compositionally biased region" description="Basic and acidic residues" evidence="2">
    <location>
        <begin position="178"/>
        <end position="192"/>
    </location>
</feature>
<feature type="binding site" evidence="1">
    <location>
        <position position="22"/>
    </location>
    <ligand>
        <name>ATP</name>
        <dbReference type="ChEBI" id="CHEBI:30616"/>
    </ligand>
</feature>
<feature type="binding site" evidence="1">
    <location>
        <begin position="64"/>
        <end position="69"/>
    </location>
    <ligand>
        <name>ATP</name>
        <dbReference type="ChEBI" id="CHEBI:30616"/>
    </ligand>
</feature>
<feature type="binding site" evidence="1">
    <location>
        <position position="280"/>
    </location>
    <ligand>
        <name>ATP</name>
        <dbReference type="ChEBI" id="CHEBI:30616"/>
    </ligand>
</feature>
<feature type="binding site" evidence="1">
    <location>
        <position position="345"/>
    </location>
    <ligand>
        <name>ATP</name>
        <dbReference type="ChEBI" id="CHEBI:30616"/>
    </ligand>
</feature>
<feature type="binding site" evidence="1">
    <location>
        <position position="417"/>
    </location>
    <ligand>
        <name>ATP</name>
        <dbReference type="ChEBI" id="CHEBI:30616"/>
    </ligand>
</feature>
<feature type="helix" evidence="3">
    <location>
        <begin position="10"/>
        <end position="18"/>
    </location>
</feature>
<feature type="helix" evidence="3">
    <location>
        <begin position="25"/>
        <end position="42"/>
    </location>
</feature>
<feature type="helix" evidence="3">
    <location>
        <begin position="46"/>
        <end position="49"/>
    </location>
</feature>
<feature type="strand" evidence="3">
    <location>
        <begin position="57"/>
        <end position="60"/>
    </location>
</feature>
<feature type="helix" evidence="3">
    <location>
        <begin position="67"/>
        <end position="78"/>
    </location>
</feature>
<feature type="strand" evidence="3">
    <location>
        <begin position="82"/>
        <end position="86"/>
    </location>
</feature>
<feature type="helix" evidence="3">
    <location>
        <begin position="87"/>
        <end position="89"/>
    </location>
</feature>
<feature type="helix" evidence="3">
    <location>
        <begin position="102"/>
        <end position="119"/>
    </location>
</feature>
<feature type="helix" evidence="3">
    <location>
        <begin position="125"/>
        <end position="134"/>
    </location>
</feature>
<feature type="helix" evidence="3">
    <location>
        <begin position="136"/>
        <end position="139"/>
    </location>
</feature>
<feature type="helix" evidence="3">
    <location>
        <begin position="260"/>
        <end position="274"/>
    </location>
</feature>
<feature type="strand" evidence="3">
    <location>
        <begin position="276"/>
        <end position="281"/>
    </location>
</feature>
<feature type="helix" evidence="3">
    <location>
        <begin position="282"/>
        <end position="285"/>
    </location>
</feature>
<feature type="helix" evidence="3">
    <location>
        <begin position="301"/>
        <end position="310"/>
    </location>
</feature>
<feature type="strand" evidence="3">
    <location>
        <begin position="313"/>
        <end position="316"/>
    </location>
</feature>
<feature type="strand" evidence="3">
    <location>
        <begin position="319"/>
        <end position="322"/>
    </location>
</feature>
<feature type="strand" evidence="3">
    <location>
        <begin position="327"/>
        <end position="332"/>
    </location>
</feature>
<feature type="strand" evidence="3">
    <location>
        <begin position="335"/>
        <end position="337"/>
    </location>
</feature>
<feature type="helix" evidence="3">
    <location>
        <begin position="339"/>
        <end position="341"/>
    </location>
</feature>
<feature type="helix" evidence="3">
    <location>
        <begin position="344"/>
        <end position="348"/>
    </location>
</feature>
<feature type="strand" evidence="3">
    <location>
        <begin position="352"/>
        <end position="355"/>
    </location>
</feature>
<feature type="helix" evidence="3">
    <location>
        <begin position="361"/>
        <end position="369"/>
    </location>
</feature>
<feature type="helix" evidence="3">
    <location>
        <begin position="375"/>
        <end position="385"/>
    </location>
</feature>
<feature type="strand" evidence="3">
    <location>
        <begin position="388"/>
        <end position="392"/>
    </location>
</feature>
<feature type="helix" evidence="3">
    <location>
        <begin position="394"/>
        <end position="410"/>
    </location>
</feature>
<feature type="helix" evidence="3">
    <location>
        <begin position="415"/>
        <end position="417"/>
    </location>
</feature>
<feature type="helix" evidence="3">
    <location>
        <begin position="418"/>
        <end position="426"/>
    </location>
</feature>
<feature type="helix" evidence="3">
    <location>
        <begin position="428"/>
        <end position="433"/>
    </location>
</feature>
<feature type="strand" evidence="3">
    <location>
        <begin position="440"/>
        <end position="444"/>
    </location>
</feature>
<feature type="helix" evidence="3">
    <location>
        <begin position="446"/>
        <end position="458"/>
    </location>
</feature>
<feature type="helix" evidence="3">
    <location>
        <begin position="460"/>
        <end position="466"/>
    </location>
</feature>
<proteinExistence type="evidence at protein level"/>